<gene>
    <name type="primary">Ts</name>
    <name type="ORF">CG3181</name>
</gene>
<evidence type="ECO:0000250" key="1"/>
<evidence type="ECO:0000250" key="2">
    <source>
        <dbReference type="UniProtKB" id="P0A884"/>
    </source>
</evidence>
<evidence type="ECO:0000256" key="3">
    <source>
        <dbReference type="SAM" id="MobiDB-lite"/>
    </source>
</evidence>
<evidence type="ECO:0000269" key="4">
    <source>
    </source>
</evidence>
<evidence type="ECO:0000269" key="5">
    <source>
    </source>
</evidence>
<evidence type="ECO:0000305" key="6"/>
<accession>O76511</accession>
<accession>Q9VQJ3</accession>
<proteinExistence type="evidence at protein level"/>
<keyword id="KW-0489">Methyltransferase</keyword>
<keyword id="KW-0545">Nucleotide biosynthesis</keyword>
<keyword id="KW-0597">Phosphoprotein</keyword>
<keyword id="KW-1185">Reference proteome</keyword>
<keyword id="KW-0808">Transferase</keyword>
<dbReference type="EC" id="2.1.1.45"/>
<dbReference type="EMBL" id="AF073994">
    <property type="protein sequence ID" value="AAC27622.1"/>
    <property type="molecule type" value="Genomic_DNA"/>
</dbReference>
<dbReference type="EMBL" id="AE014134">
    <property type="protein sequence ID" value="AAF51176.1"/>
    <property type="molecule type" value="Genomic_DNA"/>
</dbReference>
<dbReference type="RefSeq" id="NP_001285570.1">
    <property type="nucleotide sequence ID" value="NM_001298641.1"/>
</dbReference>
<dbReference type="RefSeq" id="NP_477367.1">
    <property type="nucleotide sequence ID" value="NM_058019.4"/>
</dbReference>
<dbReference type="SMR" id="O76511"/>
<dbReference type="BioGRID" id="59719">
    <property type="interactions" value="2"/>
</dbReference>
<dbReference type="DIP" id="DIP-20012N"/>
<dbReference type="FunCoup" id="O76511">
    <property type="interactions" value="1403"/>
</dbReference>
<dbReference type="IntAct" id="O76511">
    <property type="interactions" value="5"/>
</dbReference>
<dbReference type="STRING" id="7227.FBpp0077363"/>
<dbReference type="GlyGen" id="O76511">
    <property type="glycosylation" value="1 site, 1 O-linked glycan (1 site)"/>
</dbReference>
<dbReference type="iPTMnet" id="O76511"/>
<dbReference type="PaxDb" id="7227-FBpp0077363"/>
<dbReference type="DNASU" id="33499"/>
<dbReference type="EnsemblMetazoa" id="FBtr0077679">
    <property type="protein sequence ID" value="FBpp0077363"/>
    <property type="gene ID" value="FBgn0024920"/>
</dbReference>
<dbReference type="EnsemblMetazoa" id="FBtr0343784">
    <property type="protein sequence ID" value="FBpp0310349"/>
    <property type="gene ID" value="FBgn0024920"/>
</dbReference>
<dbReference type="GeneID" id="33499"/>
<dbReference type="KEGG" id="dme:Dmel_CG3181"/>
<dbReference type="AGR" id="FB:FBgn0024920"/>
<dbReference type="CTD" id="33499"/>
<dbReference type="FlyBase" id="FBgn0024920">
    <property type="gene designation" value="Ts"/>
</dbReference>
<dbReference type="VEuPathDB" id="VectorBase:FBgn0024920"/>
<dbReference type="eggNOG" id="KOG0673">
    <property type="taxonomic scope" value="Eukaryota"/>
</dbReference>
<dbReference type="HOGENOM" id="CLU_021669_0_2_1"/>
<dbReference type="InParanoid" id="O76511"/>
<dbReference type="OMA" id="AYGRFWR"/>
<dbReference type="OrthoDB" id="766at2759"/>
<dbReference type="PhylomeDB" id="O76511"/>
<dbReference type="Reactome" id="R-DME-499943">
    <property type="pathway name" value="Interconversion of nucleotide di- and triphosphates"/>
</dbReference>
<dbReference type="UniPathway" id="UPA00575"/>
<dbReference type="BioGRID-ORCS" id="33499">
    <property type="hits" value="1 hit in 3 CRISPR screens"/>
</dbReference>
<dbReference type="GenomeRNAi" id="33499"/>
<dbReference type="PRO" id="PR:O76511"/>
<dbReference type="Proteomes" id="UP000000803">
    <property type="component" value="Chromosome 2L"/>
</dbReference>
<dbReference type="Bgee" id="FBgn0024920">
    <property type="expression patterns" value="Expressed in secondary oocyte and 49 other cell types or tissues"/>
</dbReference>
<dbReference type="ExpressionAtlas" id="O76511">
    <property type="expression patterns" value="baseline and differential"/>
</dbReference>
<dbReference type="GO" id="GO:0005737">
    <property type="term" value="C:cytoplasm"/>
    <property type="evidence" value="ECO:0000250"/>
    <property type="project" value="FlyBase"/>
</dbReference>
<dbReference type="GO" id="GO:0005829">
    <property type="term" value="C:cytosol"/>
    <property type="evidence" value="ECO:0000318"/>
    <property type="project" value="GO_Central"/>
</dbReference>
<dbReference type="GO" id="GO:0005743">
    <property type="term" value="C:mitochondrial inner membrane"/>
    <property type="evidence" value="ECO:0000250"/>
    <property type="project" value="FlyBase"/>
</dbReference>
<dbReference type="GO" id="GO:0005739">
    <property type="term" value="C:mitochondrion"/>
    <property type="evidence" value="ECO:0000318"/>
    <property type="project" value="GO_Central"/>
</dbReference>
<dbReference type="GO" id="GO:0004799">
    <property type="term" value="F:thymidylate synthase activity"/>
    <property type="evidence" value="ECO:0000250"/>
    <property type="project" value="FlyBase"/>
</dbReference>
<dbReference type="GO" id="GO:0006231">
    <property type="term" value="P:dTMP biosynthetic process"/>
    <property type="evidence" value="ECO:0000250"/>
    <property type="project" value="FlyBase"/>
</dbReference>
<dbReference type="GO" id="GO:0006235">
    <property type="term" value="P:dTTP biosynthetic process"/>
    <property type="evidence" value="ECO:0007669"/>
    <property type="project" value="UniProtKB-UniPathway"/>
</dbReference>
<dbReference type="GO" id="GO:0032259">
    <property type="term" value="P:methylation"/>
    <property type="evidence" value="ECO:0007669"/>
    <property type="project" value="UniProtKB-KW"/>
</dbReference>
<dbReference type="CDD" id="cd00351">
    <property type="entry name" value="TS_Pyrimidine_HMase"/>
    <property type="match status" value="1"/>
</dbReference>
<dbReference type="FunFam" id="3.30.572.10:FF:000017">
    <property type="entry name" value="GM18183"/>
    <property type="match status" value="1"/>
</dbReference>
<dbReference type="Gene3D" id="3.30.572.10">
    <property type="entry name" value="Thymidylate synthase/dCMP hydroxymethylase domain"/>
    <property type="match status" value="1"/>
</dbReference>
<dbReference type="HAMAP" id="MF_00008">
    <property type="entry name" value="Thymidy_synth_bact"/>
    <property type="match status" value="1"/>
</dbReference>
<dbReference type="InterPro" id="IPR045097">
    <property type="entry name" value="Thymidate_synth/dCMP_Mease"/>
</dbReference>
<dbReference type="InterPro" id="IPR023451">
    <property type="entry name" value="Thymidate_synth/dCMP_Mease_dom"/>
</dbReference>
<dbReference type="InterPro" id="IPR036926">
    <property type="entry name" value="Thymidate_synth/dCMP_Mease_sf"/>
</dbReference>
<dbReference type="InterPro" id="IPR000398">
    <property type="entry name" value="Thymidylate_synthase"/>
</dbReference>
<dbReference type="InterPro" id="IPR020940">
    <property type="entry name" value="Thymidylate_synthase_AS"/>
</dbReference>
<dbReference type="NCBIfam" id="NF002497">
    <property type="entry name" value="PRK01827.1-3"/>
    <property type="match status" value="1"/>
</dbReference>
<dbReference type="NCBIfam" id="TIGR03284">
    <property type="entry name" value="thym_sym"/>
    <property type="match status" value="1"/>
</dbReference>
<dbReference type="PANTHER" id="PTHR11548:SF2">
    <property type="entry name" value="THYMIDYLATE SYNTHASE"/>
    <property type="match status" value="1"/>
</dbReference>
<dbReference type="PANTHER" id="PTHR11548">
    <property type="entry name" value="THYMIDYLATE SYNTHASE 1"/>
    <property type="match status" value="1"/>
</dbReference>
<dbReference type="Pfam" id="PF00303">
    <property type="entry name" value="Thymidylat_synt"/>
    <property type="match status" value="1"/>
</dbReference>
<dbReference type="PRINTS" id="PR00108">
    <property type="entry name" value="THYMDSNTHASE"/>
</dbReference>
<dbReference type="SUPFAM" id="SSF55831">
    <property type="entry name" value="Thymidylate synthase/dCMP hydroxymethylase"/>
    <property type="match status" value="1"/>
</dbReference>
<dbReference type="PROSITE" id="PS00091">
    <property type="entry name" value="THYMIDYLATE_SYNTHASE"/>
    <property type="match status" value="1"/>
</dbReference>
<feature type="chain" id="PRO_0000140905" description="Thymidylate synthase">
    <location>
        <begin position="1"/>
        <end position="321"/>
    </location>
</feature>
<feature type="region of interest" description="Disordered" evidence="3">
    <location>
        <begin position="1"/>
        <end position="32"/>
    </location>
</feature>
<feature type="active site" description="Nucleophile" evidence="2">
    <location>
        <position position="201"/>
    </location>
</feature>
<feature type="binding site" description="in other chain" evidence="2">
    <location>
        <position position="56"/>
    </location>
    <ligand>
        <name>dUMP</name>
        <dbReference type="ChEBI" id="CHEBI:246422"/>
        <note>ligand shared between dimeric partners</note>
    </ligand>
</feature>
<feature type="binding site" evidence="2">
    <location>
        <begin position="181"/>
        <end position="182"/>
    </location>
    <ligand>
        <name>dUMP</name>
        <dbReference type="ChEBI" id="CHEBI:246422"/>
        <note>ligand shared between dimeric partners</note>
    </ligand>
</feature>
<feature type="binding site" description="in other chain" evidence="2">
    <location>
        <begin position="223"/>
        <end position="226"/>
    </location>
    <ligand>
        <name>dUMP</name>
        <dbReference type="ChEBI" id="CHEBI:246422"/>
        <note>ligand shared between dimeric partners</note>
    </ligand>
</feature>
<feature type="binding site" evidence="2">
    <location>
        <position position="226"/>
    </location>
    <ligand>
        <name>(6R)-5,10-methylene-5,6,7,8-tetrahydrofolate</name>
        <dbReference type="ChEBI" id="CHEBI:15636"/>
    </ligand>
</feature>
<feature type="binding site" description="in other chain" evidence="2">
    <location>
        <position position="234"/>
    </location>
    <ligand>
        <name>dUMP</name>
        <dbReference type="ChEBI" id="CHEBI:246422"/>
        <note>ligand shared between dimeric partners</note>
    </ligand>
</feature>
<feature type="binding site" description="in other chain" evidence="2">
    <location>
        <begin position="264"/>
        <end position="266"/>
    </location>
    <ligand>
        <name>dUMP</name>
        <dbReference type="ChEBI" id="CHEBI:246422"/>
        <note>ligand shared between dimeric partners</note>
    </ligand>
</feature>
<feature type="binding site" evidence="2">
    <location>
        <position position="320"/>
    </location>
    <ligand>
        <name>(6R)-5,10-methylene-5,6,7,8-tetrahydrofolate</name>
        <dbReference type="ChEBI" id="CHEBI:15636"/>
    </ligand>
</feature>
<feature type="modified residue" description="Phosphoserine" evidence="5">
    <location>
        <position position="24"/>
    </location>
</feature>
<feature type="modified residue" description="Phosphoserine" evidence="5">
    <location>
        <position position="26"/>
    </location>
</feature>
<feature type="modified residue" description="Phosphotyrosine" evidence="5">
    <location>
        <position position="39"/>
    </location>
</feature>
<feature type="modified residue" description="Phosphotyrosine" evidence="4">
    <location>
        <position position="208"/>
    </location>
</feature>
<feature type="modified residue" description="Phosphoserine" evidence="4">
    <location>
        <position position="210"/>
    </location>
</feature>
<feature type="sequence conflict" description="In Ref. 1; AAC27622." evidence="6" ref="1">
    <original>I</original>
    <variation>M</variation>
    <location>
        <position position="193"/>
    </location>
</feature>
<sequence>MVLTPTKDGPDQESMPLPADNGESPSKQQAPVNRDEMHYLDLLRHIIANGEQRMDRTEVGTLSVFGSQMRFDMRNSFPLLTTKRVFFRAVAEELLWFVAGKTDAKLLQAKNVHIWDGNSSREFLDKMGFTGRAVGDLGPVYGFQWRHFGAQYGTCDDDYSGKGIDQLRQVIDTIRNNPSDRRIIMSAWNPLDIPKMALPPCHCLAQFYVSEKRGELSCQLYQRSADMGLGVPFNIASYALLTHMIAHVTGLKPGDFVHTMGDTHVYLNHVEPLKEQLERTPRPFPKLIIKRQVQDIEDFRFEDFQIVDYNPHPKIQMDMAV</sequence>
<name>TYSY_DROME</name>
<comment type="catalytic activity">
    <reaction>
        <text>dUMP + (6R)-5,10-methylene-5,6,7,8-tetrahydrofolate = 7,8-dihydrofolate + dTMP</text>
        <dbReference type="Rhea" id="RHEA:12104"/>
        <dbReference type="ChEBI" id="CHEBI:15636"/>
        <dbReference type="ChEBI" id="CHEBI:57451"/>
        <dbReference type="ChEBI" id="CHEBI:63528"/>
        <dbReference type="ChEBI" id="CHEBI:246422"/>
        <dbReference type="EC" id="2.1.1.45"/>
    </reaction>
</comment>
<comment type="pathway">
    <text>Pyrimidine metabolism; dTTP biosynthesis.</text>
</comment>
<comment type="subunit">
    <text evidence="1">Homodimer.</text>
</comment>
<comment type="similarity">
    <text evidence="6">Belongs to the thymidylate synthase family.</text>
</comment>
<protein>
    <recommendedName>
        <fullName>Thymidylate synthase</fullName>
        <shortName>TS</shortName>
        <shortName>TSase</shortName>
        <ecNumber>2.1.1.45</ecNumber>
    </recommendedName>
</protein>
<organism>
    <name type="scientific">Drosophila melanogaster</name>
    <name type="common">Fruit fly</name>
    <dbReference type="NCBI Taxonomy" id="7227"/>
    <lineage>
        <taxon>Eukaryota</taxon>
        <taxon>Metazoa</taxon>
        <taxon>Ecdysozoa</taxon>
        <taxon>Arthropoda</taxon>
        <taxon>Hexapoda</taxon>
        <taxon>Insecta</taxon>
        <taxon>Pterygota</taxon>
        <taxon>Neoptera</taxon>
        <taxon>Endopterygota</taxon>
        <taxon>Diptera</taxon>
        <taxon>Brachycera</taxon>
        <taxon>Muscomorpha</taxon>
        <taxon>Ephydroidea</taxon>
        <taxon>Drosophilidae</taxon>
        <taxon>Drosophila</taxon>
        <taxon>Sophophora</taxon>
    </lineage>
</organism>
<reference key="1">
    <citation type="submission" date="1998-06" db="EMBL/GenBank/DDBJ databases">
        <title>Genomic organization of the Drosophlia 23C genetic interval: identification of 3 genes in the 10Kb region surrounding the RRP1 gene.</title>
        <authorList>
            <person name="Tsoi S.C.M."/>
            <person name="Huang S.M."/>
            <person name="Sander M."/>
        </authorList>
    </citation>
    <scope>NUCLEOTIDE SEQUENCE [GENOMIC DNA]</scope>
    <source>
        <strain>Canton-S</strain>
    </source>
</reference>
<reference key="2">
    <citation type="journal article" date="2000" name="Science">
        <title>The genome sequence of Drosophila melanogaster.</title>
        <authorList>
            <person name="Adams M.D."/>
            <person name="Celniker S.E."/>
            <person name="Holt R.A."/>
            <person name="Evans C.A."/>
            <person name="Gocayne J.D."/>
            <person name="Amanatides P.G."/>
            <person name="Scherer S.E."/>
            <person name="Li P.W."/>
            <person name="Hoskins R.A."/>
            <person name="Galle R.F."/>
            <person name="George R.A."/>
            <person name="Lewis S.E."/>
            <person name="Richards S."/>
            <person name="Ashburner M."/>
            <person name="Henderson S.N."/>
            <person name="Sutton G.G."/>
            <person name="Wortman J.R."/>
            <person name="Yandell M.D."/>
            <person name="Zhang Q."/>
            <person name="Chen L.X."/>
            <person name="Brandon R.C."/>
            <person name="Rogers Y.-H.C."/>
            <person name="Blazej R.G."/>
            <person name="Champe M."/>
            <person name="Pfeiffer B.D."/>
            <person name="Wan K.H."/>
            <person name="Doyle C."/>
            <person name="Baxter E.G."/>
            <person name="Helt G."/>
            <person name="Nelson C.R."/>
            <person name="Miklos G.L.G."/>
            <person name="Abril J.F."/>
            <person name="Agbayani A."/>
            <person name="An H.-J."/>
            <person name="Andrews-Pfannkoch C."/>
            <person name="Baldwin D."/>
            <person name="Ballew R.M."/>
            <person name="Basu A."/>
            <person name="Baxendale J."/>
            <person name="Bayraktaroglu L."/>
            <person name="Beasley E.M."/>
            <person name="Beeson K.Y."/>
            <person name="Benos P.V."/>
            <person name="Berman B.P."/>
            <person name="Bhandari D."/>
            <person name="Bolshakov S."/>
            <person name="Borkova D."/>
            <person name="Botchan M.R."/>
            <person name="Bouck J."/>
            <person name="Brokstein P."/>
            <person name="Brottier P."/>
            <person name="Burtis K.C."/>
            <person name="Busam D.A."/>
            <person name="Butler H."/>
            <person name="Cadieu E."/>
            <person name="Center A."/>
            <person name="Chandra I."/>
            <person name="Cherry J.M."/>
            <person name="Cawley S."/>
            <person name="Dahlke C."/>
            <person name="Davenport L.B."/>
            <person name="Davies P."/>
            <person name="de Pablos B."/>
            <person name="Delcher A."/>
            <person name="Deng Z."/>
            <person name="Mays A.D."/>
            <person name="Dew I."/>
            <person name="Dietz S.M."/>
            <person name="Dodson K."/>
            <person name="Doup L.E."/>
            <person name="Downes M."/>
            <person name="Dugan-Rocha S."/>
            <person name="Dunkov B.C."/>
            <person name="Dunn P."/>
            <person name="Durbin K.J."/>
            <person name="Evangelista C.C."/>
            <person name="Ferraz C."/>
            <person name="Ferriera S."/>
            <person name="Fleischmann W."/>
            <person name="Fosler C."/>
            <person name="Gabrielian A.E."/>
            <person name="Garg N.S."/>
            <person name="Gelbart W.M."/>
            <person name="Glasser K."/>
            <person name="Glodek A."/>
            <person name="Gong F."/>
            <person name="Gorrell J.H."/>
            <person name="Gu Z."/>
            <person name="Guan P."/>
            <person name="Harris M."/>
            <person name="Harris N.L."/>
            <person name="Harvey D.A."/>
            <person name="Heiman T.J."/>
            <person name="Hernandez J.R."/>
            <person name="Houck J."/>
            <person name="Hostin D."/>
            <person name="Houston K.A."/>
            <person name="Howland T.J."/>
            <person name="Wei M.-H."/>
            <person name="Ibegwam C."/>
            <person name="Jalali M."/>
            <person name="Kalush F."/>
            <person name="Karpen G.H."/>
            <person name="Ke Z."/>
            <person name="Kennison J.A."/>
            <person name="Ketchum K.A."/>
            <person name="Kimmel B.E."/>
            <person name="Kodira C.D."/>
            <person name="Kraft C.L."/>
            <person name="Kravitz S."/>
            <person name="Kulp D."/>
            <person name="Lai Z."/>
            <person name="Lasko P."/>
            <person name="Lei Y."/>
            <person name="Levitsky A.A."/>
            <person name="Li J.H."/>
            <person name="Li Z."/>
            <person name="Liang Y."/>
            <person name="Lin X."/>
            <person name="Liu X."/>
            <person name="Mattei B."/>
            <person name="McIntosh T.C."/>
            <person name="McLeod M.P."/>
            <person name="McPherson D."/>
            <person name="Merkulov G."/>
            <person name="Milshina N.V."/>
            <person name="Mobarry C."/>
            <person name="Morris J."/>
            <person name="Moshrefi A."/>
            <person name="Mount S.M."/>
            <person name="Moy M."/>
            <person name="Murphy B."/>
            <person name="Murphy L."/>
            <person name="Muzny D.M."/>
            <person name="Nelson D.L."/>
            <person name="Nelson D.R."/>
            <person name="Nelson K.A."/>
            <person name="Nixon K."/>
            <person name="Nusskern D.R."/>
            <person name="Pacleb J.M."/>
            <person name="Palazzolo M."/>
            <person name="Pittman G.S."/>
            <person name="Pan S."/>
            <person name="Pollard J."/>
            <person name="Puri V."/>
            <person name="Reese M.G."/>
            <person name="Reinert K."/>
            <person name="Remington K."/>
            <person name="Saunders R.D.C."/>
            <person name="Scheeler F."/>
            <person name="Shen H."/>
            <person name="Shue B.C."/>
            <person name="Siden-Kiamos I."/>
            <person name="Simpson M."/>
            <person name="Skupski M.P."/>
            <person name="Smith T.J."/>
            <person name="Spier E."/>
            <person name="Spradling A.C."/>
            <person name="Stapleton M."/>
            <person name="Strong R."/>
            <person name="Sun E."/>
            <person name="Svirskas R."/>
            <person name="Tector C."/>
            <person name="Turner R."/>
            <person name="Venter E."/>
            <person name="Wang A.H."/>
            <person name="Wang X."/>
            <person name="Wang Z.-Y."/>
            <person name="Wassarman D.A."/>
            <person name="Weinstock G.M."/>
            <person name="Weissenbach J."/>
            <person name="Williams S.M."/>
            <person name="Woodage T."/>
            <person name="Worley K.C."/>
            <person name="Wu D."/>
            <person name="Yang S."/>
            <person name="Yao Q.A."/>
            <person name="Ye J."/>
            <person name="Yeh R.-F."/>
            <person name="Zaveri J.S."/>
            <person name="Zhan M."/>
            <person name="Zhang G."/>
            <person name="Zhao Q."/>
            <person name="Zheng L."/>
            <person name="Zheng X.H."/>
            <person name="Zhong F.N."/>
            <person name="Zhong W."/>
            <person name="Zhou X."/>
            <person name="Zhu S.C."/>
            <person name="Zhu X."/>
            <person name="Smith H.O."/>
            <person name="Gibbs R.A."/>
            <person name="Myers E.W."/>
            <person name="Rubin G.M."/>
            <person name="Venter J.C."/>
        </authorList>
    </citation>
    <scope>NUCLEOTIDE SEQUENCE [LARGE SCALE GENOMIC DNA]</scope>
    <source>
        <strain>Berkeley</strain>
    </source>
</reference>
<reference key="3">
    <citation type="journal article" date="2002" name="Genome Biol.">
        <title>Annotation of the Drosophila melanogaster euchromatic genome: a systematic review.</title>
        <authorList>
            <person name="Misra S."/>
            <person name="Crosby M.A."/>
            <person name="Mungall C.J."/>
            <person name="Matthews B.B."/>
            <person name="Campbell K.S."/>
            <person name="Hradecky P."/>
            <person name="Huang Y."/>
            <person name="Kaminker J.S."/>
            <person name="Millburn G.H."/>
            <person name="Prochnik S.E."/>
            <person name="Smith C.D."/>
            <person name="Tupy J.L."/>
            <person name="Whitfield E.J."/>
            <person name="Bayraktaroglu L."/>
            <person name="Berman B.P."/>
            <person name="Bettencourt B.R."/>
            <person name="Celniker S.E."/>
            <person name="de Grey A.D.N.J."/>
            <person name="Drysdale R.A."/>
            <person name="Harris N.L."/>
            <person name="Richter J."/>
            <person name="Russo S."/>
            <person name="Schroeder A.J."/>
            <person name="Shu S.Q."/>
            <person name="Stapleton M."/>
            <person name="Yamada C."/>
            <person name="Ashburner M."/>
            <person name="Gelbart W.M."/>
            <person name="Rubin G.M."/>
            <person name="Lewis S.E."/>
        </authorList>
    </citation>
    <scope>GENOME REANNOTATION</scope>
    <source>
        <strain>Berkeley</strain>
    </source>
</reference>
<reference key="4">
    <citation type="journal article" date="2007" name="Mol. Biosyst.">
        <title>An integrated chemical, mass spectrometric and computational strategy for (quantitative) phosphoproteomics: application to Drosophila melanogaster Kc167 cells.</title>
        <authorList>
            <person name="Bodenmiller B."/>
            <person name="Mueller L.N."/>
            <person name="Pedrioli P.G.A."/>
            <person name="Pflieger D."/>
            <person name="Juenger M.A."/>
            <person name="Eng J.K."/>
            <person name="Aebersold R."/>
            <person name="Tao W.A."/>
        </authorList>
    </citation>
    <scope>PHOSPHORYLATION [LARGE SCALE ANALYSIS] AT TYR-208 AND SER-210</scope>
    <scope>IDENTIFICATION BY MASS SPECTROMETRY</scope>
</reference>
<reference key="5">
    <citation type="journal article" date="2008" name="J. Proteome Res.">
        <title>Phosphoproteome analysis of Drosophila melanogaster embryos.</title>
        <authorList>
            <person name="Zhai B."/>
            <person name="Villen J."/>
            <person name="Beausoleil S.A."/>
            <person name="Mintseris J."/>
            <person name="Gygi S.P."/>
        </authorList>
    </citation>
    <scope>PHOSPHORYLATION [LARGE SCALE ANALYSIS] AT SER-24; SER-26 AND TYR-39</scope>
    <scope>IDENTIFICATION BY MASS SPECTROMETRY</scope>
    <source>
        <tissue>Embryo</tissue>
    </source>
</reference>